<organism>
    <name type="scientific">Homo sapiens</name>
    <name type="common">Human</name>
    <dbReference type="NCBI Taxonomy" id="9606"/>
    <lineage>
        <taxon>Eukaryota</taxon>
        <taxon>Metazoa</taxon>
        <taxon>Chordata</taxon>
        <taxon>Craniata</taxon>
        <taxon>Vertebrata</taxon>
        <taxon>Euteleostomi</taxon>
        <taxon>Mammalia</taxon>
        <taxon>Eutheria</taxon>
        <taxon>Euarchontoglires</taxon>
        <taxon>Primates</taxon>
        <taxon>Haplorrhini</taxon>
        <taxon>Catarrhini</taxon>
        <taxon>Hominidae</taxon>
        <taxon>Homo</taxon>
    </lineage>
</organism>
<reference key="1">
    <citation type="journal article" date="2005" name="Nature">
        <title>DNA sequence and analysis of human chromosome 18.</title>
        <authorList>
            <person name="Nusbaum C."/>
            <person name="Zody M.C."/>
            <person name="Borowsky M.L."/>
            <person name="Kamal M."/>
            <person name="Kodira C.D."/>
            <person name="Taylor T.D."/>
            <person name="Whittaker C.A."/>
            <person name="Chang J.L."/>
            <person name="Cuomo C.A."/>
            <person name="Dewar K."/>
            <person name="FitzGerald M.G."/>
            <person name="Yang X."/>
            <person name="Abouelleil A."/>
            <person name="Allen N.R."/>
            <person name="Anderson S."/>
            <person name="Bloom T."/>
            <person name="Bugalter B."/>
            <person name="Butler J."/>
            <person name="Cook A."/>
            <person name="DeCaprio D."/>
            <person name="Engels R."/>
            <person name="Garber M."/>
            <person name="Gnirke A."/>
            <person name="Hafez N."/>
            <person name="Hall J.L."/>
            <person name="Norman C.H."/>
            <person name="Itoh T."/>
            <person name="Jaffe D.B."/>
            <person name="Kuroki Y."/>
            <person name="Lehoczky J."/>
            <person name="Lui A."/>
            <person name="Macdonald P."/>
            <person name="Mauceli E."/>
            <person name="Mikkelsen T.S."/>
            <person name="Naylor J.W."/>
            <person name="Nicol R."/>
            <person name="Nguyen C."/>
            <person name="Noguchi H."/>
            <person name="O'Leary S.B."/>
            <person name="Piqani B."/>
            <person name="Smith C.L."/>
            <person name="Talamas J.A."/>
            <person name="Topham K."/>
            <person name="Totoki Y."/>
            <person name="Toyoda A."/>
            <person name="Wain H.M."/>
            <person name="Young S.K."/>
            <person name="Zeng Q."/>
            <person name="Zimmer A.R."/>
            <person name="Fujiyama A."/>
            <person name="Hattori M."/>
            <person name="Birren B.W."/>
            <person name="Sakaki Y."/>
            <person name="Lander E.S."/>
        </authorList>
    </citation>
    <scope>NUCLEOTIDE SEQUENCE [LARGE SCALE GENOMIC DNA]</scope>
</reference>
<keyword id="KW-0433">Leucine-rich repeat</keyword>
<keyword id="KW-1185">Reference proteome</keyword>
<keyword id="KW-0677">Repeat</keyword>
<feature type="initiator methionine" description="Removed" evidence="1">
    <location>
        <position position="1"/>
    </location>
</feature>
<feature type="chain" id="PRO_0000310986" description="Leucine-rich repeat-containing protein 30">
    <location>
        <begin position="2"/>
        <end position="301"/>
    </location>
</feature>
<feature type="repeat" description="LRR 1">
    <location>
        <begin position="72"/>
        <end position="93"/>
    </location>
</feature>
<feature type="repeat" description="LRR 2">
    <location>
        <begin position="95"/>
        <end position="116"/>
    </location>
</feature>
<feature type="repeat" description="LRR 3">
    <location>
        <begin position="118"/>
        <end position="139"/>
    </location>
</feature>
<feature type="repeat" description="LRR 4">
    <location>
        <begin position="141"/>
        <end position="163"/>
    </location>
</feature>
<feature type="repeat" description="LRR 5">
    <location>
        <begin position="164"/>
        <end position="185"/>
    </location>
</feature>
<feature type="repeat" description="LRR 6">
    <location>
        <begin position="187"/>
        <end position="208"/>
    </location>
</feature>
<feature type="repeat" description="LRR 7">
    <location>
        <begin position="210"/>
        <end position="231"/>
    </location>
</feature>
<feature type="repeat" description="LRR 8">
    <location>
        <begin position="233"/>
        <end position="254"/>
    </location>
</feature>
<feature type="repeat" description="LRR 9">
    <location>
        <begin position="265"/>
        <end position="287"/>
    </location>
</feature>
<accession>A6NM36</accession>
<name>LRC30_HUMAN</name>
<gene>
    <name type="primary">LRRC30</name>
</gene>
<protein>
    <recommendedName>
        <fullName>Leucine-rich repeat-containing protein 30</fullName>
    </recommendedName>
</protein>
<sequence length="301" mass="34034">MGARQSRASSKDKGPKRMLFTGRRQKFSPWDDALLSGRDPRSLLKRGMHHVSFSLVTRGMTDIPDFLWGLSEVQKLNLSHNQLRVLPPEVGKLTRIVVLNLCGNRLKSLPREVSLLQCLKVLFVNMNCLTEVPAELSLCRKLEVLSLSHNCLSQLPACFADLSRLRKLNLSNNFFAHIPMCVFSLKELIFLHVGSNRLENIAESIQHLASLQIFIAEGNNIHSFPRSLCLVTSLELLNLNNNDIQTLPSELHLLCRLVRIAWNPMDKGLHISHNPLSKPLPELVEGGLEMLFGYLKDKKHT</sequence>
<evidence type="ECO:0000305" key="1"/>
<dbReference type="EMBL" id="AP005270">
    <property type="status" value="NOT_ANNOTATED_CDS"/>
    <property type="molecule type" value="Genomic_DNA"/>
</dbReference>
<dbReference type="CCDS" id="CCDS42409.1"/>
<dbReference type="RefSeq" id="NP_001099051.1">
    <property type="nucleotide sequence ID" value="NM_001105581.3"/>
</dbReference>
<dbReference type="SMR" id="A6NM36"/>
<dbReference type="BioGRID" id="130861">
    <property type="interactions" value="1"/>
</dbReference>
<dbReference type="STRING" id="9606.ENSP00000372959"/>
<dbReference type="iPTMnet" id="A6NM36"/>
<dbReference type="PhosphoSitePlus" id="A6NM36"/>
<dbReference type="BioMuta" id="LRRC30"/>
<dbReference type="MassIVE" id="A6NM36"/>
<dbReference type="PaxDb" id="9606-ENSP00000372959"/>
<dbReference type="Antibodypedia" id="66148">
    <property type="antibodies" value="20 antibodies from 5 providers"/>
</dbReference>
<dbReference type="DNASU" id="339291"/>
<dbReference type="Ensembl" id="ENST00000383467.3">
    <property type="protein sequence ID" value="ENSP00000372959.2"/>
    <property type="gene ID" value="ENSG00000206422.3"/>
</dbReference>
<dbReference type="GeneID" id="339291"/>
<dbReference type="KEGG" id="hsa:339291"/>
<dbReference type="MANE-Select" id="ENST00000383467.3">
    <property type="protein sequence ID" value="ENSP00000372959.2"/>
    <property type="RefSeq nucleotide sequence ID" value="NM_001105581.3"/>
    <property type="RefSeq protein sequence ID" value="NP_001099051.1"/>
</dbReference>
<dbReference type="UCSC" id="uc010wzk.3">
    <property type="organism name" value="human"/>
</dbReference>
<dbReference type="AGR" id="HGNC:30219"/>
<dbReference type="CTD" id="339291"/>
<dbReference type="DisGeNET" id="339291"/>
<dbReference type="GeneCards" id="LRRC30"/>
<dbReference type="HGNC" id="HGNC:30219">
    <property type="gene designation" value="LRRC30"/>
</dbReference>
<dbReference type="HPA" id="ENSG00000206422">
    <property type="expression patterns" value="Group enriched (skeletal muscle, tongue)"/>
</dbReference>
<dbReference type="neXtProt" id="NX_A6NM36"/>
<dbReference type="OpenTargets" id="ENSG00000206422"/>
<dbReference type="PharmGKB" id="PA134945901"/>
<dbReference type="VEuPathDB" id="HostDB:ENSG00000206422"/>
<dbReference type="eggNOG" id="KOG0619">
    <property type="taxonomic scope" value="Eukaryota"/>
</dbReference>
<dbReference type="GeneTree" id="ENSGT00940000161019"/>
<dbReference type="HOGENOM" id="CLU_000288_18_15_1"/>
<dbReference type="InParanoid" id="A6NM36"/>
<dbReference type="OMA" id="FVQIPLC"/>
<dbReference type="OrthoDB" id="676979at2759"/>
<dbReference type="PAN-GO" id="A6NM36">
    <property type="GO annotations" value="4 GO annotations based on evolutionary models"/>
</dbReference>
<dbReference type="PhylomeDB" id="A6NM36"/>
<dbReference type="TreeFam" id="TF333627"/>
<dbReference type="SignaLink" id="A6NM36"/>
<dbReference type="BioGRID-ORCS" id="339291">
    <property type="hits" value="4 hits in 1137 CRISPR screens"/>
</dbReference>
<dbReference type="GenomeRNAi" id="339291"/>
<dbReference type="Pharos" id="A6NM36">
    <property type="development level" value="Tdark"/>
</dbReference>
<dbReference type="PRO" id="PR:A6NM36"/>
<dbReference type="Proteomes" id="UP000005640">
    <property type="component" value="Chromosome 18"/>
</dbReference>
<dbReference type="RNAct" id="A6NM36">
    <property type="molecule type" value="protein"/>
</dbReference>
<dbReference type="Bgee" id="ENSG00000206422">
    <property type="expression patterns" value="Expressed in skeletal muscle tissue and 12 other cell types or tissues"/>
</dbReference>
<dbReference type="GO" id="GO:0035556">
    <property type="term" value="P:intracellular signal transduction"/>
    <property type="evidence" value="ECO:0000318"/>
    <property type="project" value="GO_Central"/>
</dbReference>
<dbReference type="FunFam" id="3.80.10.10:FF:000856">
    <property type="entry name" value="Leucine-rich repeat-containing protein 30"/>
    <property type="match status" value="1"/>
</dbReference>
<dbReference type="Gene3D" id="3.80.10.10">
    <property type="entry name" value="Ribonuclease Inhibitor"/>
    <property type="match status" value="2"/>
</dbReference>
<dbReference type="InterPro" id="IPR001611">
    <property type="entry name" value="Leu-rich_rpt"/>
</dbReference>
<dbReference type="InterPro" id="IPR003591">
    <property type="entry name" value="Leu-rich_rpt_typical-subtyp"/>
</dbReference>
<dbReference type="InterPro" id="IPR032675">
    <property type="entry name" value="LRR_dom_sf"/>
</dbReference>
<dbReference type="InterPro" id="IPR050216">
    <property type="entry name" value="LRR_domain-containing"/>
</dbReference>
<dbReference type="PANTHER" id="PTHR48051">
    <property type="match status" value="1"/>
</dbReference>
<dbReference type="PANTHER" id="PTHR48051:SF57">
    <property type="entry name" value="LEUCINE RICH REPEAT CONTAINING 30"/>
    <property type="match status" value="1"/>
</dbReference>
<dbReference type="Pfam" id="PF00560">
    <property type="entry name" value="LRR_1"/>
    <property type="match status" value="1"/>
</dbReference>
<dbReference type="Pfam" id="PF13855">
    <property type="entry name" value="LRR_8"/>
    <property type="match status" value="1"/>
</dbReference>
<dbReference type="SMART" id="SM00369">
    <property type="entry name" value="LRR_TYP"/>
    <property type="match status" value="6"/>
</dbReference>
<dbReference type="SUPFAM" id="SSF52058">
    <property type="entry name" value="L domain-like"/>
    <property type="match status" value="1"/>
</dbReference>
<dbReference type="PROSITE" id="PS51450">
    <property type="entry name" value="LRR"/>
    <property type="match status" value="8"/>
</dbReference>
<proteinExistence type="predicted"/>